<reference key="1">
    <citation type="journal article" date="1996" name="J. Bacteriol.">
        <title>Erwinia amylovora secretes harpin via a type III pathway and contains a homolog of yopN of Yersinia spp.</title>
        <authorList>
            <person name="Bogdanove A.J."/>
            <person name="Wei Z.-M."/>
            <person name="Zhao L."/>
            <person name="Beer S.V."/>
        </authorList>
    </citation>
    <scope>NUCLEOTIDE SEQUENCE [GENOMIC DNA]</scope>
    <source>
        <strain>321</strain>
    </source>
</reference>
<reference key="2">
    <citation type="submission" date="2006-03" db="EMBL/GenBank/DDBJ databases">
        <authorList>
            <person name="Beer S.V."/>
        </authorList>
    </citation>
    <scope>SEQUENCE REVISION</scope>
</reference>
<name>HRCR_ERWAM</name>
<comment type="function">
    <text>Required for the secretion of harpin.</text>
</comment>
<comment type="subcellular location">
    <subcellularLocation>
        <location evidence="2">Cell membrane</location>
        <topology evidence="2">Multi-pass membrane protein</topology>
    </subcellularLocation>
</comment>
<comment type="similarity">
    <text evidence="2">Belongs to the FliP/MopC/SpaP family.</text>
</comment>
<keyword id="KW-1003">Cell membrane</keyword>
<keyword id="KW-0928">Hypersensitive response elicitation</keyword>
<keyword id="KW-0472">Membrane</keyword>
<keyword id="KW-0812">Transmembrane</keyword>
<keyword id="KW-1133">Transmembrane helix</keyword>
<gene>
    <name type="primary">hrcR</name>
</gene>
<evidence type="ECO:0000255" key="1"/>
<evidence type="ECO:0000305" key="2"/>
<dbReference type="EMBL" id="L25828">
    <property type="protein sequence ID" value="AAB06005.2"/>
    <property type="molecule type" value="Genomic_DNA"/>
</dbReference>
<dbReference type="SMR" id="Q46646"/>
<dbReference type="OMA" id="VYIMAPV"/>
<dbReference type="GO" id="GO:0005886">
    <property type="term" value="C:plasma membrane"/>
    <property type="evidence" value="ECO:0007669"/>
    <property type="project" value="UniProtKB-SubCell"/>
</dbReference>
<dbReference type="GO" id="GO:0009306">
    <property type="term" value="P:protein secretion"/>
    <property type="evidence" value="ECO:0007669"/>
    <property type="project" value="InterPro"/>
</dbReference>
<dbReference type="GO" id="GO:0052040">
    <property type="term" value="P:symbiont-mediated perturbation of host programmed cell death"/>
    <property type="evidence" value="ECO:0007669"/>
    <property type="project" value="UniProtKB-KW"/>
</dbReference>
<dbReference type="InterPro" id="IPR005838">
    <property type="entry name" value="T3SS_IM_P"/>
</dbReference>
<dbReference type="InterPro" id="IPR005773">
    <property type="entry name" value="T3SS_YscR-like"/>
</dbReference>
<dbReference type="NCBIfam" id="NF009438">
    <property type="entry name" value="PRK12797.1"/>
    <property type="match status" value="1"/>
</dbReference>
<dbReference type="NCBIfam" id="TIGR01102">
    <property type="entry name" value="yscR"/>
    <property type="match status" value="1"/>
</dbReference>
<dbReference type="PANTHER" id="PTHR30587">
    <property type="entry name" value="FLAGELLAR BIOSYNTHETIC PROTEIN FLIP"/>
    <property type="match status" value="1"/>
</dbReference>
<dbReference type="PANTHER" id="PTHR30587:SF2">
    <property type="entry name" value="SURFACE PRESENTATION OF ANTIGENS PROTEIN SPAP"/>
    <property type="match status" value="1"/>
</dbReference>
<dbReference type="Pfam" id="PF00813">
    <property type="entry name" value="FliP"/>
    <property type="match status" value="1"/>
</dbReference>
<dbReference type="PRINTS" id="PR01302">
    <property type="entry name" value="TYPE3IMPPROT"/>
</dbReference>
<dbReference type="PROSITE" id="PS01060">
    <property type="entry name" value="FLIP_1"/>
    <property type="match status" value="1"/>
</dbReference>
<dbReference type="PROSITE" id="PS01061">
    <property type="entry name" value="FLIP_2"/>
    <property type="match status" value="1"/>
</dbReference>
<organism>
    <name type="scientific">Erwinia amylovora</name>
    <name type="common">Fire blight bacteria</name>
    <dbReference type="NCBI Taxonomy" id="552"/>
    <lineage>
        <taxon>Bacteria</taxon>
        <taxon>Pseudomonadati</taxon>
        <taxon>Pseudomonadota</taxon>
        <taxon>Gammaproteobacteria</taxon>
        <taxon>Enterobacterales</taxon>
        <taxon>Erwiniaceae</taxon>
        <taxon>Erwinia</taxon>
    </lineage>
</organism>
<protein>
    <recommendedName>
        <fullName>Harpin secretion protein HrcR</fullName>
    </recommendedName>
</protein>
<proteinExistence type="inferred from homology"/>
<sequence>MNTEQFDPMTFALFLGALSLIPMLMIVCTCFLKISMVLLITRNAIGVQQVPPNMALYGIALAATLFVMAPVFNQMQQQFSQVPADLSSMDNLKTSVTNGVAPLQKFMTHNTDPDILIHLQENSVRMWPKEMSDSVNKDNLLLVIPAFVLSELQAGFKIGFLIYIPFIVIDLIVSNVLLALGMQMVAPMTLSLPLKMLLFVLINGWTRLLDGLFYSYL</sequence>
<feature type="chain" id="PRO_0000191995" description="Harpin secretion protein HrcR">
    <location>
        <begin position="1"/>
        <end position="217"/>
    </location>
</feature>
<feature type="transmembrane region" description="Helical" evidence="1">
    <location>
        <begin position="11"/>
        <end position="31"/>
    </location>
</feature>
<feature type="transmembrane region" description="Helical" evidence="1">
    <location>
        <begin position="52"/>
        <end position="72"/>
    </location>
</feature>
<feature type="transmembrane region" description="Helical" evidence="1">
    <location>
        <begin position="158"/>
        <end position="178"/>
    </location>
</feature>
<feature type="transmembrane region" description="Helical" evidence="1">
    <location>
        <begin position="185"/>
        <end position="205"/>
    </location>
</feature>
<accession>Q46646</accession>